<sequence>MKKSLVLKASVAVATLVPMLSFAAEGDDPAKAAFNSLQASATEYIGYAWAMVVVIVGATIGIKLFKKFTSKAS</sequence>
<protein>
    <recommendedName>
        <fullName>Capsid protein G8P</fullName>
    </recommendedName>
    <alternativeName>
        <fullName>Coat protein B</fullName>
    </alternativeName>
    <alternativeName>
        <fullName>Gene 8 protein</fullName>
        <shortName>G8P</shortName>
    </alternativeName>
    <alternativeName>
        <fullName>M13 procoat</fullName>
    </alternativeName>
    <alternativeName>
        <fullName>Major coat protein</fullName>
    </alternativeName>
</protein>
<evidence type="ECO:0000305" key="1"/>
<evidence type="ECO:0007829" key="2">
    <source>
        <dbReference type="PDB" id="8IXK"/>
    </source>
</evidence>
<reference key="1">
    <citation type="journal article" date="1980" name="Gene">
        <title>Nucleotide sequence of the filamentous bacteriophage M13 DNA genome: comparison with phage fd.</title>
        <authorList>
            <person name="van Wezenbeek P.M.G.F."/>
            <person name="Hulsebos T.J.M."/>
            <person name="Schoenmakers J.G.G."/>
        </authorList>
    </citation>
    <scope>NUCLEOTIDE SEQUENCE [GENOMIC DNA]</scope>
</reference>
<reference key="2">
    <citation type="journal article" date="1987" name="Science">
        <title>Bacteriophage M13 procoat protein inserts into the plasma membrane as a loop structure.</title>
        <authorList>
            <person name="Kuhn A."/>
        </authorList>
    </citation>
    <scope>INSERTION IN MEMBRANE</scope>
</reference>
<reference key="3">
    <citation type="journal article" date="2000" name="Nature">
        <title>YidC mediates membrane protein insertion in bacteria.</title>
        <authorList>
            <person name="Samuelson J.C."/>
            <person name="Chen M."/>
            <person name="Jiang F."/>
            <person name="Moeller I."/>
            <person name="Wiedmann M."/>
            <person name="Kuhn A."/>
            <person name="Phillips G.J."/>
            <person name="Dalbey R.E."/>
        </authorList>
    </citation>
    <scope>MEMBRANE INSERTION DEPENDS ON YIDC</scope>
</reference>
<reference key="4">
    <citation type="journal article" date="2003" name="J. Biol. Chem.">
        <title>Conditional lethal mutations separate the M13 procoat and Pf3 coat functions of YidC: different YidC structural requirements for membrane protein insertion.</title>
        <authorList>
            <person name="Chen M."/>
            <person name="Xie K."/>
            <person name="Nouwen N."/>
            <person name="Driessen A.J."/>
            <person name="Dalbey R.E."/>
        </authorList>
    </citation>
    <scope>MEMBRANE INSERTION DEPENDS ON YIDC</scope>
</reference>
<reference key="5">
    <citation type="journal article" date="1992" name="Biochemistry">
        <title>Assignment of amide 1H and 15N NMR resonances in detergent-solubilized M13 coat protein: a model for the coat protein dimer.</title>
        <authorList>
            <person name="Henry G.D."/>
            <person name="Sykes B.D."/>
        </authorList>
    </citation>
    <scope>STRUCTURE BY NMR</scope>
</reference>
<reference key="6">
    <citation type="journal article" date="1995" name="Eur. J. Biochem.">
        <title>NMR studies of the major coat protein of bacteriophage M13. Structural information of gVIIIp in dodecylphosphocholine micelles.</title>
        <authorList>
            <person name="Papavoine C.H.M."/>
            <person name="Aelen J.M.A."/>
            <person name="Konings R.N.H."/>
            <person name="Hilbers C.W."/>
            <person name="van de Ven F.J.M."/>
        </authorList>
    </citation>
    <scope>STRUCTURE BY NMR</scope>
</reference>
<reference key="7">
    <citation type="journal article" date="1998" name="J. Mol. Biol.">
        <title>Solution structure of the M13 major coat protein in detergent micelles: a basis for a model of phage assembly involving specific residues.</title>
        <authorList>
            <person name="Papavoine C.H."/>
            <person name="Christiaans B.E."/>
            <person name="Folmer R.H."/>
            <person name="Konings R.N."/>
            <person name="Hilbers C.W."/>
        </authorList>
    </citation>
    <scope>STRUCTURE BY NMR</scope>
</reference>
<name>CAPSD_BPM13</name>
<proteinExistence type="evidence at protein level"/>
<organism>
    <name type="scientific">Enterobacteria phage M13</name>
    <name type="common">Bacteriophage M13</name>
    <dbReference type="NCBI Taxonomy" id="1977402"/>
    <lineage>
        <taxon>Viruses</taxon>
        <taxon>Monodnaviria</taxon>
        <taxon>Loebvirae</taxon>
        <taxon>Hofneiviricota</taxon>
        <taxon>Faserviricetes</taxon>
        <taxon>Tubulavirales</taxon>
        <taxon>Inoviridae</taxon>
        <taxon>Inovirus</taxon>
    </lineage>
</organism>
<gene>
    <name type="primary">VIII</name>
</gene>
<feature type="signal peptide">
    <location>
        <begin position="1"/>
        <end position="23"/>
    </location>
</feature>
<feature type="chain" id="PRO_0000003298" description="Capsid protein G8P">
    <location>
        <begin position="24"/>
        <end position="73"/>
    </location>
</feature>
<feature type="topological domain" description="Periplasmic">
    <location>
        <begin position="24"/>
        <end position="47"/>
    </location>
</feature>
<feature type="transmembrane region" description="Helical">
    <location>
        <begin position="48"/>
        <end position="68"/>
    </location>
</feature>
<feature type="topological domain" description="Cytoplasmic">
    <location>
        <begin position="69"/>
        <end position="73"/>
    </location>
</feature>
<feature type="helix" evidence="2">
    <location>
        <begin position="29"/>
        <end position="72"/>
    </location>
</feature>
<comment type="function">
    <text>Self assembles to form a helical capsid wrapping up the viral genomic DNA. The capsid displays a filamentous structure with a length of 760-1950 nm and a width of 6-8 nm. The virion assembly and budding take place at the host inner membrane.</text>
</comment>
<comment type="subunit">
    <text>Homomultimerizes. There are about 2,700 copies of this protein in the phage capsid.</text>
</comment>
<comment type="subcellular location">
    <subcellularLocation>
        <location>Virion</location>
    </subcellularLocation>
    <subcellularLocation>
        <location>Host cell inner membrane</location>
        <topology>Single-pass type I membrane protein</topology>
    </subcellularLocation>
    <text>Insertion into the host inner membrane requires YidC but not the Sec translocon. Virion assembly occurs after insertion.</text>
</comment>
<comment type="similarity">
    <text evidence="1">Belongs to the inovirus capsid protein family.</text>
</comment>
<dbReference type="EMBL" id="V00604">
    <property type="protein sequence ID" value="CAA23861.1"/>
    <property type="molecule type" value="Genomic_DNA"/>
</dbReference>
<dbReference type="PIR" id="D04226">
    <property type="entry name" value="VCBPM3"/>
</dbReference>
<dbReference type="RefSeq" id="NP_510890.1">
    <property type="nucleotide sequence ID" value="NC_003287.2"/>
</dbReference>
<dbReference type="RefSeq" id="YP_010774617.1">
    <property type="nucleotide sequence ID" value="NC_074765.1"/>
</dbReference>
<dbReference type="PDB" id="2CPB">
    <property type="method" value="NMR"/>
    <property type="chains" value="A=24-73"/>
</dbReference>
<dbReference type="PDB" id="2CPS">
    <property type="method" value="NMR"/>
    <property type="chains" value="A=24-73"/>
</dbReference>
<dbReference type="PDB" id="2MJZ">
    <property type="method" value="NMR"/>
    <property type="chains" value="A/B/C/D/E/F/G/H/I/J/K/L/M/N/O/P/Q/R/S/T/U/V/W/X/Y/Z/a/b/c/d/e/f/g/h/i=24-73"/>
</dbReference>
<dbReference type="PDB" id="8IXJ">
    <property type="method" value="EM"/>
    <property type="resolution" value="3.10 A"/>
    <property type="chains" value="A/AA/B/BA/C/CA/D/DA/E/EA/F/FA/G/GA/H/HA/I/IA/J/JA/K/KA/L/LA/M/MA/N/NA/O/OA=24-73"/>
</dbReference>
<dbReference type="PDB" id="8IXK">
    <property type="method" value="EM"/>
    <property type="resolution" value="3.30 A"/>
    <property type="chains" value="B/C/D/G/H/I/L/M/N/P/Q/S/V/W/X=1-73"/>
</dbReference>
<dbReference type="PDB" id="8IXL">
    <property type="method" value="EM"/>
    <property type="resolution" value="3.50 A"/>
    <property type="chains" value="A/AA/B/C/CA/DA/E/EA/FA/G/H/HA/I/JA/K/M/N/O/P/R/T/V/W/X/Z=24-73"/>
</dbReference>
<dbReference type="PDB" id="8JWT">
    <property type="method" value="EM"/>
    <property type="resolution" value="3.40 A"/>
    <property type="chains" value="A/AA/B/BA/C/CA/D/DA/E/EA/F/FA/G/GA/H/HA/I/IA/J/JA/K/KA/L/LA/M/MA/N/NA/O/OA=24-73"/>
</dbReference>
<dbReference type="PDB" id="8JWW">
    <property type="method" value="EM"/>
    <property type="resolution" value="3.50 A"/>
    <property type="chains" value="A/AA/B/C/CA/DA/E/EA/FA/G/H/HA/I/JA/K/M/N/O/P/R/T/V/W/X/Z=24-73"/>
</dbReference>
<dbReference type="PDB" id="8JWX">
    <property type="method" value="EM"/>
    <property type="resolution" value="3.30 A"/>
    <property type="chains" value="B/C/D/G/H/I/L/M/N/P/Q/S/V/W/X=24-73"/>
</dbReference>
<dbReference type="PDBsum" id="2CPB"/>
<dbReference type="PDBsum" id="2CPS"/>
<dbReference type="PDBsum" id="2MJZ"/>
<dbReference type="PDBsum" id="8IXJ"/>
<dbReference type="PDBsum" id="8IXK"/>
<dbReference type="PDBsum" id="8IXL"/>
<dbReference type="PDBsum" id="8JWT"/>
<dbReference type="PDBsum" id="8JWW"/>
<dbReference type="PDBsum" id="8JWX"/>
<dbReference type="BMRB" id="P69541"/>
<dbReference type="EMDB" id="EMD-35793"/>
<dbReference type="EMDB" id="EMD-35794"/>
<dbReference type="EMDB" id="EMD-35795"/>
<dbReference type="SMR" id="P69541"/>
<dbReference type="GeneID" id="80510927"/>
<dbReference type="GeneID" id="927333"/>
<dbReference type="KEGG" id="vg:927333"/>
<dbReference type="EvolutionaryTrace" id="P69541"/>
<dbReference type="Proteomes" id="UP000002111">
    <property type="component" value="Genome"/>
</dbReference>
<dbReference type="GO" id="GO:0019029">
    <property type="term" value="C:helical viral capsid"/>
    <property type="evidence" value="ECO:0007669"/>
    <property type="project" value="UniProtKB-KW"/>
</dbReference>
<dbReference type="GO" id="GO:0020002">
    <property type="term" value="C:host cell plasma membrane"/>
    <property type="evidence" value="ECO:0007669"/>
    <property type="project" value="UniProtKB-SubCell"/>
</dbReference>
<dbReference type="GO" id="GO:0016020">
    <property type="term" value="C:membrane"/>
    <property type="evidence" value="ECO:0007669"/>
    <property type="project" value="UniProtKB-KW"/>
</dbReference>
<dbReference type="Gene3D" id="1.20.5.80">
    <property type="match status" value="1"/>
</dbReference>
<dbReference type="InterPro" id="IPR008020">
    <property type="entry name" value="G8P"/>
</dbReference>
<dbReference type="InterPro" id="IPR023390">
    <property type="entry name" value="Phage_M13_G8P_capsid_dom_sf"/>
</dbReference>
<dbReference type="Pfam" id="PF19199">
    <property type="entry name" value="Phage_coatGP8"/>
    <property type="match status" value="1"/>
</dbReference>
<dbReference type="PIRSF" id="PIRSF004117">
    <property type="entry name" value="Phage_coat_B"/>
    <property type="match status" value="1"/>
</dbReference>
<dbReference type="SUPFAM" id="SSF57987">
    <property type="entry name" value="Inovirus (filamentous phage) major coat protein"/>
    <property type="match status" value="1"/>
</dbReference>
<accession>P69541</accession>
<accession>P03617</accession>
<organismHost>
    <name type="scientific">Escherichia coli</name>
    <dbReference type="NCBI Taxonomy" id="562"/>
</organismHost>
<keyword id="KW-0002">3D-structure</keyword>
<keyword id="KW-0167">Capsid protein</keyword>
<keyword id="KW-1139">Helical capsid protein</keyword>
<keyword id="KW-1030">Host cell inner membrane</keyword>
<keyword id="KW-1032">Host cell membrane</keyword>
<keyword id="KW-1043">Host membrane</keyword>
<keyword id="KW-0472">Membrane</keyword>
<keyword id="KW-1185">Reference proteome</keyword>
<keyword id="KW-0732">Signal</keyword>
<keyword id="KW-0812">Transmembrane</keyword>
<keyword id="KW-1133">Transmembrane helix</keyword>
<keyword id="KW-0946">Virion</keyword>